<accession>F1N9Y5</accession>
<accession>Q5ZJ91</accession>
<comment type="function">
    <text evidence="5">Non-receptor tyrosine kinase which mediates signal transduction downstream of a variety of transmembrane receptors including classical immunoreceptors like the B-cell receptor (BCR). Regulates several biological processes including innate and adaptive immunity, cell adhesion, osteoclast maturation, platelet activation and vascular development. Assembles into signaling complexes with activated receptors at the plasma membrane via interaction between its SH2 domains and the receptor tyrosine-phosphorylated ITAM domains. The association with the receptor can also be indirect and mediated by adapter proteins containing ITAM or partial hemITAM domains. The phosphorylation of the ITAM domains is generally mediated by SRC subfamily kinases upon engagement of the receptor. More rarely signal transduction via SYK could be ITAM-independent. Direct downstream effectors phosphorylated by SYK include DEPTOR, VAV1, PLCG1, PI-3-kinase, LCP2 and BLNK. Initially identified as essential in B-cell receptor (BCR) signaling, it is necessary for the maturation of B-cells most probably at the pro-B to pre-B transition. Activated upon BCR engagement, it phosphorylates and activates BLNK an adapter linking the activated BCR to downstream signaling adapters and effectors.</text>
</comment>
<comment type="catalytic activity">
    <reaction evidence="4">
        <text>L-tyrosyl-[protein] + ATP = O-phospho-L-tyrosyl-[protein] + ADP + H(+)</text>
        <dbReference type="Rhea" id="RHEA:10596"/>
        <dbReference type="Rhea" id="RHEA-COMP:10136"/>
        <dbReference type="Rhea" id="RHEA-COMP:20101"/>
        <dbReference type="ChEBI" id="CHEBI:15378"/>
        <dbReference type="ChEBI" id="CHEBI:30616"/>
        <dbReference type="ChEBI" id="CHEBI:46858"/>
        <dbReference type="ChEBI" id="CHEBI:61978"/>
        <dbReference type="ChEBI" id="CHEBI:456216"/>
        <dbReference type="EC" id="2.7.10.2"/>
    </reaction>
</comment>
<comment type="activity regulation">
    <text evidence="1">Autoinhibited. Intramolecular binding of the interdomains A and B (also called linker region) to parts of the catalytic domain keep the catalytic center in an inactive conformation. The phosphorylation of the interdomains or the binding of the SH2 domains with dually phosphorylated ITAM domains on transmembrane proteins disrupt those intramolecular interactions allowing the kinase domain to adopt an active conformation. The phosphorylation of SYK and of the ITAM domains which is responsible for SYK activation is essentially mediated by SRC subfamily kinases, like LYN, upon transmembrane receptors engagement. Downstream signaling adapters and intermediates may mediate positive and/or negative feedback regulation (By similarity).</text>
</comment>
<comment type="subcellular location">
    <subcellularLocation>
        <location evidence="6">Cell membrane</location>
    </subcellularLocation>
    <subcellularLocation>
        <location evidence="6">Cytoplasm</location>
        <location evidence="6">Cytosol</location>
    </subcellularLocation>
</comment>
<comment type="domain">
    <text evidence="1">The SH2 domains mediate the interaction of SYK with the phosphorylated ITAM domains of transmembrane proteins.</text>
</comment>
<comment type="similarity">
    <text evidence="2">Belongs to the protein kinase superfamily. Tyr protein kinase family. SYK/ZAP-70 subfamily.</text>
</comment>
<evidence type="ECO:0000250" key="1"/>
<evidence type="ECO:0000255" key="2">
    <source>
        <dbReference type="PROSITE-ProRule" id="PRU00159"/>
    </source>
</evidence>
<evidence type="ECO:0000255" key="3">
    <source>
        <dbReference type="PROSITE-ProRule" id="PRU00191"/>
    </source>
</evidence>
<evidence type="ECO:0000255" key="4">
    <source>
        <dbReference type="PROSITE-ProRule" id="PRU10028"/>
    </source>
</evidence>
<evidence type="ECO:0000269" key="5">
    <source>
    </source>
</evidence>
<evidence type="ECO:0000305" key="6"/>
<sequence length="613" mass="69901">MASNMANPANHLPYFFGNITREEAEEYLMQGGMSDGLYLLRQSRNYLGGFALSLAYGRKVHHYTIERELSGTYAIAGGKSHASPAELINYHSEEADGLICLLRKSFNRPPGVEPKTGPFEDLKENLIREYVKQTWNLQGHALEQAIISQKPQLEKLIATTAHEKMPWFHGRISREESEHRILIGSRNNGKFLIRERDSNGSYALCLLNDGKVLHYRIDRDKTGKLSIPDGKRFDTLWQLVEHYSYKPDGLLRVLSIPCPRHGSESDNVVFDTRPLPGTPSKLQTPIGAPSDDQTPFNPYVLQRARGLIGAEKGDQREALPMDTEVYESPYADPDEIKPKNVTLDRKLLTLEEGELGSGNFGTVKKGFYKMKKGAKPVAVKILKNESNDPAIKDELLREANVMQQLDNPYIVRMIGICEAEAWMLVMEMAELGPLNKFLQKNRHVTEKNITELVHQVSMGMKYLEENNFVHRDLAARNVLLVTQHYAKISDFGLSKALSADENYYKAQSHGKWPVKWYAPECMNFYKFSSKSDVWSFGVLMWEAFSYGQKPYKGMKGGEVAQMIERGERMECPEACPVEVYDLMKLCWTYNVDDRPGFVAVELRLRNYYYDISH</sequence>
<protein>
    <recommendedName>
        <fullName>Tyrosine-protein kinase SYK</fullName>
        <ecNumber>2.7.10.2</ecNumber>
    </recommendedName>
</protein>
<keyword id="KW-0067">ATP-binding</keyword>
<keyword id="KW-1003">Cell membrane</keyword>
<keyword id="KW-0963">Cytoplasm</keyword>
<keyword id="KW-0391">Immunity</keyword>
<keyword id="KW-0399">Innate immunity</keyword>
<keyword id="KW-0418">Kinase</keyword>
<keyword id="KW-0472">Membrane</keyword>
<keyword id="KW-0547">Nucleotide-binding</keyword>
<keyword id="KW-1185">Reference proteome</keyword>
<keyword id="KW-0677">Repeat</keyword>
<keyword id="KW-0727">SH2 domain</keyword>
<keyword id="KW-0808">Transferase</keyword>
<keyword id="KW-0829">Tyrosine-protein kinase</keyword>
<reference key="1">
    <citation type="journal article" date="2005" name="Genome Biol.">
        <title>Full-length cDNAs from chicken bursal lymphocytes to facilitate gene function analysis.</title>
        <authorList>
            <person name="Caldwell R.B."/>
            <person name="Kierzek A.M."/>
            <person name="Arakawa H."/>
            <person name="Bezzubov Y."/>
            <person name="Zaim J."/>
            <person name="Fiedler P."/>
            <person name="Kutter S."/>
            <person name="Blagodatski A."/>
            <person name="Kostovska D."/>
            <person name="Koter M."/>
            <person name="Plachy J."/>
            <person name="Carninci P."/>
            <person name="Hayashizaki Y."/>
            <person name="Buerstedde J.-M."/>
        </authorList>
    </citation>
    <scope>NUCLEOTIDE SEQUENCE [LARGE SCALE MRNA]</scope>
    <source>
        <strain>CB</strain>
        <tissue>Bursa of Fabricius</tissue>
    </source>
</reference>
<reference key="2">
    <citation type="journal article" date="2004" name="Nature">
        <title>Sequence and comparative analysis of the chicken genome provide unique perspectives on vertebrate evolution.</title>
        <authorList>
            <person name="Hillier L.W."/>
            <person name="Miller W."/>
            <person name="Birney E."/>
            <person name="Warren W."/>
            <person name="Hardison R.C."/>
            <person name="Ponting C.P."/>
            <person name="Bork P."/>
            <person name="Burt D.W."/>
            <person name="Groenen M.A.M."/>
            <person name="Delany M.E."/>
            <person name="Dodgson J.B."/>
            <person name="Chinwalla A.T."/>
            <person name="Cliften P.F."/>
            <person name="Clifton S.W."/>
            <person name="Delehaunty K.D."/>
            <person name="Fronick C."/>
            <person name="Fulton R.S."/>
            <person name="Graves T.A."/>
            <person name="Kremitzki C."/>
            <person name="Layman D."/>
            <person name="Magrini V."/>
            <person name="McPherson J.D."/>
            <person name="Miner T.L."/>
            <person name="Minx P."/>
            <person name="Nash W.E."/>
            <person name="Nhan M.N."/>
            <person name="Nelson J.O."/>
            <person name="Oddy L.G."/>
            <person name="Pohl C.S."/>
            <person name="Randall-Maher J."/>
            <person name="Smith S.M."/>
            <person name="Wallis J.W."/>
            <person name="Yang S.-P."/>
            <person name="Romanov M.N."/>
            <person name="Rondelli C.M."/>
            <person name="Paton B."/>
            <person name="Smith J."/>
            <person name="Morrice D."/>
            <person name="Daniels L."/>
            <person name="Tempest H.G."/>
            <person name="Robertson L."/>
            <person name="Masabanda J.S."/>
            <person name="Griffin D.K."/>
            <person name="Vignal A."/>
            <person name="Fillon V."/>
            <person name="Jacobbson L."/>
            <person name="Kerje S."/>
            <person name="Andersson L."/>
            <person name="Crooijmans R.P."/>
            <person name="Aerts J."/>
            <person name="van der Poel J.J."/>
            <person name="Ellegren H."/>
            <person name="Caldwell R.B."/>
            <person name="Hubbard S.J."/>
            <person name="Grafham D.V."/>
            <person name="Kierzek A.M."/>
            <person name="McLaren S.R."/>
            <person name="Overton I.M."/>
            <person name="Arakawa H."/>
            <person name="Beattie K.J."/>
            <person name="Bezzubov Y."/>
            <person name="Boardman P.E."/>
            <person name="Bonfield J.K."/>
            <person name="Croning M.D.R."/>
            <person name="Davies R.M."/>
            <person name="Francis M.D."/>
            <person name="Humphray S.J."/>
            <person name="Scott C.E."/>
            <person name="Taylor R.G."/>
            <person name="Tickle C."/>
            <person name="Brown W.R.A."/>
            <person name="Rogers J."/>
            <person name="Buerstedde J.-M."/>
            <person name="Wilson S.A."/>
            <person name="Stubbs L."/>
            <person name="Ovcharenko I."/>
            <person name="Gordon L."/>
            <person name="Lucas S."/>
            <person name="Miller M.M."/>
            <person name="Inoko H."/>
            <person name="Shiina T."/>
            <person name="Kaufman J."/>
            <person name="Salomonsen J."/>
            <person name="Skjoedt K."/>
            <person name="Wong G.K.-S."/>
            <person name="Wang J."/>
            <person name="Liu B."/>
            <person name="Wang J."/>
            <person name="Yu J."/>
            <person name="Yang H."/>
            <person name="Nefedov M."/>
            <person name="Koriabine M."/>
            <person name="Dejong P.J."/>
            <person name="Goodstadt L."/>
            <person name="Webber C."/>
            <person name="Dickens N.J."/>
            <person name="Letunic I."/>
            <person name="Suyama M."/>
            <person name="Torrents D."/>
            <person name="von Mering C."/>
            <person name="Zdobnov E.M."/>
            <person name="Makova K."/>
            <person name="Nekrutenko A."/>
            <person name="Elnitski L."/>
            <person name="Eswara P."/>
            <person name="King D.C."/>
            <person name="Yang S.-P."/>
            <person name="Tyekucheva S."/>
            <person name="Radakrishnan A."/>
            <person name="Harris R.S."/>
            <person name="Chiaromonte F."/>
            <person name="Taylor J."/>
            <person name="He J."/>
            <person name="Rijnkels M."/>
            <person name="Griffiths-Jones S."/>
            <person name="Ureta-Vidal A."/>
            <person name="Hoffman M.M."/>
            <person name="Severin J."/>
            <person name="Searle S.M.J."/>
            <person name="Law A.S."/>
            <person name="Speed D."/>
            <person name="Waddington D."/>
            <person name="Cheng Z."/>
            <person name="Tuzun E."/>
            <person name="Eichler E."/>
            <person name="Bao Z."/>
            <person name="Flicek P."/>
            <person name="Shteynberg D.D."/>
            <person name="Brent M.R."/>
            <person name="Bye J.M."/>
            <person name="Huckle E.J."/>
            <person name="Chatterji S."/>
            <person name="Dewey C."/>
            <person name="Pachter L."/>
            <person name="Kouranov A."/>
            <person name="Mourelatos Z."/>
            <person name="Hatzigeorgiou A.G."/>
            <person name="Paterson A.H."/>
            <person name="Ivarie R."/>
            <person name="Brandstrom M."/>
            <person name="Axelsson E."/>
            <person name="Backstrom N."/>
            <person name="Berlin S."/>
            <person name="Webster M.T."/>
            <person name="Pourquie O."/>
            <person name="Reymond A."/>
            <person name="Ucla C."/>
            <person name="Antonarakis S.E."/>
            <person name="Long M."/>
            <person name="Emerson J.J."/>
            <person name="Betran E."/>
            <person name="Dupanloup I."/>
            <person name="Kaessmann H."/>
            <person name="Hinrichs A.S."/>
            <person name="Bejerano G."/>
            <person name="Furey T.S."/>
            <person name="Harte R.A."/>
            <person name="Raney B."/>
            <person name="Siepel A."/>
            <person name="Kent W.J."/>
            <person name="Haussler D."/>
            <person name="Eyras E."/>
            <person name="Castelo R."/>
            <person name="Abril J.F."/>
            <person name="Castellano S."/>
            <person name="Camara F."/>
            <person name="Parra G."/>
            <person name="Guigo R."/>
            <person name="Bourque G."/>
            <person name="Tesler G."/>
            <person name="Pevzner P.A."/>
            <person name="Smit A."/>
            <person name="Fulton L.A."/>
            <person name="Mardis E.R."/>
            <person name="Wilson R.K."/>
        </authorList>
    </citation>
    <scope>NUCLEOTIDE SEQUENCE [LARGE SCALE GENOMIC DNA]</scope>
    <source>
        <strain>Red jungle fowl</strain>
    </source>
</reference>
<reference key="3">
    <citation type="journal article" date="1998" name="Immunity">
        <title>BLNK: a central linker protein in B cell activation.</title>
        <authorList>
            <person name="Fu C."/>
            <person name="Turck C.W."/>
            <person name="Kurosaki T."/>
            <person name="Chan A.C."/>
        </authorList>
    </citation>
    <scope>FUNCTION IN B-CELL RECEPTOR SIGNALING PATHWAY</scope>
    <scope>FUNCTION IN PHOSPHORYLATION OF BLNK</scope>
</reference>
<name>KSYK_CHICK</name>
<gene>
    <name type="primary">SYK</name>
    <name type="ORF">RCJMB04_19o18</name>
</gene>
<feature type="chain" id="PRO_0000415332" description="Tyrosine-protein kinase SYK">
    <location>
        <begin position="1"/>
        <end position="613"/>
    </location>
</feature>
<feature type="domain" description="SH2 1" evidence="3">
    <location>
        <begin position="14"/>
        <end position="106"/>
    </location>
</feature>
<feature type="domain" description="SH2 2" evidence="3">
    <location>
        <begin position="167"/>
        <end position="258"/>
    </location>
</feature>
<feature type="domain" description="Protein kinase" evidence="2">
    <location>
        <begin position="349"/>
        <end position="613"/>
    </location>
</feature>
<feature type="region of interest" description="Interdomain A">
    <location>
        <begin position="107"/>
        <end position="166"/>
    </location>
</feature>
<feature type="region of interest" description="Interdomain B">
    <location>
        <begin position="259"/>
        <end position="348"/>
    </location>
</feature>
<feature type="active site" description="Proton acceptor" evidence="2 4">
    <location>
        <position position="472"/>
    </location>
</feature>
<feature type="binding site" evidence="2">
    <location>
        <begin position="355"/>
        <end position="363"/>
    </location>
    <ligand>
        <name>ATP</name>
        <dbReference type="ChEBI" id="CHEBI:30616"/>
    </ligand>
</feature>
<feature type="binding site" evidence="2">
    <location>
        <position position="380"/>
    </location>
    <ligand>
        <name>ATP</name>
        <dbReference type="ChEBI" id="CHEBI:30616"/>
    </ligand>
</feature>
<feature type="sequence conflict" description="In Ref. 1; CAG32202." evidence="6" ref="1">
    <original>N</original>
    <variation>D</variation>
    <location>
        <position position="188"/>
    </location>
</feature>
<feature type="sequence conflict" description="In Ref. 1; CAG32202." evidence="6" ref="1">
    <original>E</original>
    <variation>G</variation>
    <location>
        <position position="398"/>
    </location>
</feature>
<dbReference type="EC" id="2.7.10.2"/>
<dbReference type="EMBL" id="AJ720543">
    <property type="protein sequence ID" value="CAG32202.1"/>
    <property type="molecule type" value="mRNA"/>
</dbReference>
<dbReference type="EMBL" id="AADN02069860">
    <property type="status" value="NOT_ANNOTATED_CDS"/>
    <property type="molecule type" value="Genomic_DNA"/>
</dbReference>
<dbReference type="EMBL" id="AADN02069861">
    <property type="status" value="NOT_ANNOTATED_CDS"/>
    <property type="molecule type" value="Genomic_DNA"/>
</dbReference>
<dbReference type="EMBL" id="AADN02069862">
    <property type="status" value="NOT_ANNOTATED_CDS"/>
    <property type="molecule type" value="Genomic_DNA"/>
</dbReference>
<dbReference type="EMBL" id="AADN02069863">
    <property type="status" value="NOT_ANNOTATED_CDS"/>
    <property type="molecule type" value="Genomic_DNA"/>
</dbReference>
<dbReference type="EMBL" id="AADN02069864">
    <property type="status" value="NOT_ANNOTATED_CDS"/>
    <property type="molecule type" value="Genomic_DNA"/>
</dbReference>
<dbReference type="EMBL" id="AADN02069865">
    <property type="status" value="NOT_ANNOTATED_CDS"/>
    <property type="molecule type" value="Genomic_DNA"/>
</dbReference>
<dbReference type="EMBL" id="AADN02069866">
    <property type="status" value="NOT_ANNOTATED_CDS"/>
    <property type="molecule type" value="Genomic_DNA"/>
</dbReference>
<dbReference type="EMBL" id="AADN02069867">
    <property type="status" value="NOT_ANNOTATED_CDS"/>
    <property type="molecule type" value="Genomic_DNA"/>
</dbReference>
<dbReference type="EMBL" id="AADN02069868">
    <property type="status" value="NOT_ANNOTATED_CDS"/>
    <property type="molecule type" value="Genomic_DNA"/>
</dbReference>
<dbReference type="EMBL" id="AADN02069869">
    <property type="status" value="NOT_ANNOTATED_CDS"/>
    <property type="molecule type" value="Genomic_DNA"/>
</dbReference>
<dbReference type="RefSeq" id="NP_001026601.2">
    <property type="nucleotide sequence ID" value="NM_001031430.2"/>
</dbReference>
<dbReference type="SMR" id="F1N9Y5"/>
<dbReference type="BioGRID" id="686612">
    <property type="interactions" value="97"/>
</dbReference>
<dbReference type="FunCoup" id="F1N9Y5">
    <property type="interactions" value="214"/>
</dbReference>
<dbReference type="STRING" id="9031.ENSGALP00000024509"/>
<dbReference type="GlyGen" id="F1N9Y5">
    <property type="glycosylation" value="1 site"/>
</dbReference>
<dbReference type="PaxDb" id="9031-ENSGALP00000024509"/>
<dbReference type="Ensembl" id="ENSGALT00010022248.1">
    <property type="protein sequence ID" value="ENSGALP00010012784.1"/>
    <property type="gene ID" value="ENSGALG00010009340.1"/>
</dbReference>
<dbReference type="GeneID" id="427272"/>
<dbReference type="KEGG" id="gga:427272"/>
<dbReference type="CTD" id="6850"/>
<dbReference type="VEuPathDB" id="HostDB:geneid_427272"/>
<dbReference type="eggNOG" id="ENOG502QT06">
    <property type="taxonomic scope" value="Eukaryota"/>
</dbReference>
<dbReference type="GeneTree" id="ENSGT00940000159053"/>
<dbReference type="HOGENOM" id="CLU_000288_7_2_1"/>
<dbReference type="InParanoid" id="F1N9Y5"/>
<dbReference type="OrthoDB" id="535945at2759"/>
<dbReference type="Reactome" id="R-GGA-114604">
    <property type="pathway name" value="GPVI-mediated activation cascade"/>
</dbReference>
<dbReference type="Reactome" id="R-GGA-2029481">
    <property type="pathway name" value="FCGR activation"/>
</dbReference>
<dbReference type="Reactome" id="R-GGA-2029482">
    <property type="pathway name" value="Regulation of actin dynamics for phagocytic cup formation"/>
</dbReference>
<dbReference type="Reactome" id="R-GGA-2029485">
    <property type="pathway name" value="Role of phospholipids in phagocytosis"/>
</dbReference>
<dbReference type="Reactome" id="R-GGA-2424491">
    <property type="pathway name" value="DAP12 signaling"/>
</dbReference>
<dbReference type="Reactome" id="R-GGA-354192">
    <property type="pathway name" value="Integrin signaling"/>
</dbReference>
<dbReference type="Reactome" id="R-GGA-912631">
    <property type="pathway name" value="Regulation of signaling by CBL"/>
</dbReference>
<dbReference type="Reactome" id="R-GGA-9674555">
    <property type="pathway name" value="Signaling by CSF3 (G-CSF)"/>
</dbReference>
<dbReference type="Reactome" id="R-GGA-9705462">
    <property type="pathway name" value="Inactivation of CSF3 (G-CSF) signaling"/>
</dbReference>
<dbReference type="Reactome" id="R-GGA-983695">
    <property type="pathway name" value="Antigen activates B Cell Receptor (BCR) leading to generation of second messengers"/>
</dbReference>
<dbReference type="PRO" id="PR:F1N9Y5"/>
<dbReference type="Proteomes" id="UP000000539">
    <property type="component" value="Chromosome Z"/>
</dbReference>
<dbReference type="Bgee" id="ENSGALG00000015216">
    <property type="expression patterns" value="Expressed in spleen and 7 other cell types or tissues"/>
</dbReference>
<dbReference type="GO" id="GO:0005829">
    <property type="term" value="C:cytosol"/>
    <property type="evidence" value="ECO:0007669"/>
    <property type="project" value="UniProtKB-SubCell"/>
</dbReference>
<dbReference type="GO" id="GO:0032009">
    <property type="term" value="C:early phagosome"/>
    <property type="evidence" value="ECO:0000250"/>
    <property type="project" value="UniProtKB"/>
</dbReference>
<dbReference type="GO" id="GO:0005886">
    <property type="term" value="C:plasma membrane"/>
    <property type="evidence" value="ECO:0000318"/>
    <property type="project" value="GO_Central"/>
</dbReference>
<dbReference type="GO" id="GO:0005524">
    <property type="term" value="F:ATP binding"/>
    <property type="evidence" value="ECO:0007669"/>
    <property type="project" value="UniProtKB-KW"/>
</dbReference>
<dbReference type="GO" id="GO:0004715">
    <property type="term" value="F:non-membrane spanning protein tyrosine kinase activity"/>
    <property type="evidence" value="ECO:0000315"/>
    <property type="project" value="UniProtKB"/>
</dbReference>
<dbReference type="GO" id="GO:0004713">
    <property type="term" value="F:protein tyrosine kinase activity"/>
    <property type="evidence" value="ECO:0000315"/>
    <property type="project" value="AgBase"/>
</dbReference>
<dbReference type="GO" id="GO:0002250">
    <property type="term" value="P:adaptive immune response"/>
    <property type="evidence" value="ECO:0000315"/>
    <property type="project" value="UniProtKB"/>
</dbReference>
<dbReference type="GO" id="GO:0050853">
    <property type="term" value="P:B cell receptor signaling pathway"/>
    <property type="evidence" value="ECO:0000315"/>
    <property type="project" value="UniProtKB"/>
</dbReference>
<dbReference type="GO" id="GO:0048514">
    <property type="term" value="P:blood vessel morphogenesis"/>
    <property type="evidence" value="ECO:0000250"/>
    <property type="project" value="UniProtKB"/>
</dbReference>
<dbReference type="GO" id="GO:0070301">
    <property type="term" value="P:cellular response to hydrogen peroxide"/>
    <property type="evidence" value="ECO:0000315"/>
    <property type="project" value="AgBase"/>
</dbReference>
<dbReference type="GO" id="GO:0071226">
    <property type="term" value="P:cellular response to molecule of fungal origin"/>
    <property type="evidence" value="ECO:0000250"/>
    <property type="project" value="UniProtKB"/>
</dbReference>
<dbReference type="GO" id="GO:0042742">
    <property type="term" value="P:defense response to bacterium"/>
    <property type="evidence" value="ECO:0000250"/>
    <property type="project" value="UniProtKB"/>
</dbReference>
<dbReference type="GO" id="GO:0045087">
    <property type="term" value="P:innate immune response"/>
    <property type="evidence" value="ECO:0000250"/>
    <property type="project" value="UniProtKB"/>
</dbReference>
<dbReference type="GO" id="GO:0007229">
    <property type="term" value="P:integrin-mediated signaling pathway"/>
    <property type="evidence" value="ECO:0000250"/>
    <property type="project" value="UniProtKB"/>
</dbReference>
<dbReference type="GO" id="GO:0035556">
    <property type="term" value="P:intracellular signal transduction"/>
    <property type="evidence" value="ECO:0007669"/>
    <property type="project" value="InterPro"/>
</dbReference>
<dbReference type="GO" id="GO:0002366">
    <property type="term" value="P:leukocyte activation involved in immune response"/>
    <property type="evidence" value="ECO:0000250"/>
    <property type="project" value="UniProtKB"/>
</dbReference>
<dbReference type="GO" id="GO:0007159">
    <property type="term" value="P:leukocyte cell-cell adhesion"/>
    <property type="evidence" value="ECO:0000250"/>
    <property type="project" value="UniProtKB"/>
</dbReference>
<dbReference type="GO" id="GO:0001945">
    <property type="term" value="P:lymph vessel development"/>
    <property type="evidence" value="ECO:0000250"/>
    <property type="project" value="UniProtKB"/>
</dbReference>
<dbReference type="GO" id="GO:0002281">
    <property type="term" value="P:macrophage activation involved in immune response"/>
    <property type="evidence" value="ECO:0000250"/>
    <property type="project" value="UniProtKB"/>
</dbReference>
<dbReference type="GO" id="GO:0002283">
    <property type="term" value="P:neutrophil activation involved in immune response"/>
    <property type="evidence" value="ECO:0000250"/>
    <property type="project" value="UniProtKB"/>
</dbReference>
<dbReference type="GO" id="GO:0030593">
    <property type="term" value="P:neutrophil chemotaxis"/>
    <property type="evidence" value="ECO:0000250"/>
    <property type="project" value="UniProtKB"/>
</dbReference>
<dbReference type="GO" id="GO:0018108">
    <property type="term" value="P:peptidyl-tyrosine phosphorylation"/>
    <property type="evidence" value="ECO:0000315"/>
    <property type="project" value="UniProtKB"/>
</dbReference>
<dbReference type="GO" id="GO:0045780">
    <property type="term" value="P:positive regulation of bone resorption"/>
    <property type="evidence" value="ECO:0000250"/>
    <property type="project" value="UniProtKB"/>
</dbReference>
<dbReference type="GO" id="GO:0033630">
    <property type="term" value="P:positive regulation of cell adhesion mediated by integrin"/>
    <property type="evidence" value="ECO:0000250"/>
    <property type="project" value="UniProtKB"/>
</dbReference>
<dbReference type="GO" id="GO:0090237">
    <property type="term" value="P:regulation of arachidonate secretion"/>
    <property type="evidence" value="ECO:0000250"/>
    <property type="project" value="UniProtKB"/>
</dbReference>
<dbReference type="GO" id="GO:0070372">
    <property type="term" value="P:regulation of ERK1 and ERK2 cascade"/>
    <property type="evidence" value="ECO:0000250"/>
    <property type="project" value="UniProtKB"/>
</dbReference>
<dbReference type="GO" id="GO:0043313">
    <property type="term" value="P:regulation of neutrophil degranulation"/>
    <property type="evidence" value="ECO:0000250"/>
    <property type="project" value="UniProtKB"/>
</dbReference>
<dbReference type="GO" id="GO:0050764">
    <property type="term" value="P:regulation of phagocytosis"/>
    <property type="evidence" value="ECO:0000250"/>
    <property type="project" value="UniProtKB"/>
</dbReference>
<dbReference type="GO" id="GO:0010543">
    <property type="term" value="P:regulation of platelet activation"/>
    <property type="evidence" value="ECO:0000250"/>
    <property type="project" value="UniProtKB"/>
</dbReference>
<dbReference type="GO" id="GO:0090330">
    <property type="term" value="P:regulation of platelet aggregation"/>
    <property type="evidence" value="ECO:0000250"/>
    <property type="project" value="UniProtKB"/>
</dbReference>
<dbReference type="GO" id="GO:0032928">
    <property type="term" value="P:regulation of superoxide anion generation"/>
    <property type="evidence" value="ECO:0000250"/>
    <property type="project" value="UniProtKB"/>
</dbReference>
<dbReference type="GO" id="GO:0002554">
    <property type="term" value="P:serotonin secretion by platelet"/>
    <property type="evidence" value="ECO:0000250"/>
    <property type="project" value="UniProtKB"/>
</dbReference>
<dbReference type="CDD" id="cd05116">
    <property type="entry name" value="PTKc_Syk"/>
    <property type="match status" value="1"/>
</dbReference>
<dbReference type="CDD" id="cd10401">
    <property type="entry name" value="SH2_C-SH2_Syk_like"/>
    <property type="match status" value="1"/>
</dbReference>
<dbReference type="CDD" id="cd09938">
    <property type="entry name" value="SH2_N-SH2_Zap70_Syk_like"/>
    <property type="match status" value="1"/>
</dbReference>
<dbReference type="FunFam" id="1.10.930.10:FF:000001">
    <property type="entry name" value="Tyrosine-protein kinase"/>
    <property type="match status" value="1"/>
</dbReference>
<dbReference type="FunFam" id="3.30.200.20:FF:000185">
    <property type="entry name" value="Tyrosine-protein kinase"/>
    <property type="match status" value="1"/>
</dbReference>
<dbReference type="FunFam" id="3.30.505.10:FF:000031">
    <property type="entry name" value="Tyrosine-protein kinase"/>
    <property type="match status" value="1"/>
</dbReference>
<dbReference type="FunFam" id="3.30.505.10:FF:000038">
    <property type="entry name" value="Tyrosine-protein kinase"/>
    <property type="match status" value="1"/>
</dbReference>
<dbReference type="FunFam" id="1.10.510.10:FF:000216">
    <property type="entry name" value="Tyrosine-protein kinase SYK"/>
    <property type="match status" value="1"/>
</dbReference>
<dbReference type="Gene3D" id="3.30.200.20">
    <property type="entry name" value="Phosphorylase Kinase, domain 1"/>
    <property type="match status" value="1"/>
</dbReference>
<dbReference type="Gene3D" id="3.30.505.10">
    <property type="entry name" value="SH2 domain"/>
    <property type="match status" value="2"/>
</dbReference>
<dbReference type="Gene3D" id="1.10.930.10">
    <property type="entry name" value="Syk Kinase, Chain A, domain 2"/>
    <property type="match status" value="1"/>
</dbReference>
<dbReference type="Gene3D" id="1.10.510.10">
    <property type="entry name" value="Transferase(Phosphotransferase) domain 1"/>
    <property type="match status" value="1"/>
</dbReference>
<dbReference type="InterPro" id="IPR011009">
    <property type="entry name" value="Kinase-like_dom_sf"/>
</dbReference>
<dbReference type="InterPro" id="IPR023420">
    <property type="entry name" value="Kinase_SYK/ZAP-70_inter-SH2_sf"/>
</dbReference>
<dbReference type="InterPro" id="IPR050198">
    <property type="entry name" value="Non-receptor_tyrosine_kinases"/>
</dbReference>
<dbReference type="InterPro" id="IPR000719">
    <property type="entry name" value="Prot_kinase_dom"/>
</dbReference>
<dbReference type="InterPro" id="IPR017441">
    <property type="entry name" value="Protein_kinase_ATP_BS"/>
</dbReference>
<dbReference type="InterPro" id="IPR001245">
    <property type="entry name" value="Ser-Thr/Tyr_kinase_cat_dom"/>
</dbReference>
<dbReference type="InterPro" id="IPR000980">
    <property type="entry name" value="SH2"/>
</dbReference>
<dbReference type="InterPro" id="IPR036860">
    <property type="entry name" value="SH2_dom_sf"/>
</dbReference>
<dbReference type="InterPro" id="IPR035838">
    <property type="entry name" value="SYK/ZAP-70_N_SH2"/>
</dbReference>
<dbReference type="InterPro" id="IPR008266">
    <property type="entry name" value="Tyr_kinase_AS"/>
</dbReference>
<dbReference type="InterPro" id="IPR020635">
    <property type="entry name" value="Tyr_kinase_cat_dom"/>
</dbReference>
<dbReference type="InterPro" id="IPR012234">
    <property type="entry name" value="Tyr_kinase_non-rcpt_SYK/ZAP70"/>
</dbReference>
<dbReference type="PANTHER" id="PTHR24418">
    <property type="entry name" value="TYROSINE-PROTEIN KINASE"/>
    <property type="match status" value="1"/>
</dbReference>
<dbReference type="Pfam" id="PF07714">
    <property type="entry name" value="PK_Tyr_Ser-Thr"/>
    <property type="match status" value="1"/>
</dbReference>
<dbReference type="Pfam" id="PF00017">
    <property type="entry name" value="SH2"/>
    <property type="match status" value="2"/>
</dbReference>
<dbReference type="PIRSF" id="PIRSF000604">
    <property type="entry name" value="TyrPK_SYK"/>
    <property type="match status" value="1"/>
</dbReference>
<dbReference type="PRINTS" id="PR00401">
    <property type="entry name" value="SH2DOMAIN"/>
</dbReference>
<dbReference type="PRINTS" id="PR00109">
    <property type="entry name" value="TYRKINASE"/>
</dbReference>
<dbReference type="SMART" id="SM00252">
    <property type="entry name" value="SH2"/>
    <property type="match status" value="2"/>
</dbReference>
<dbReference type="SMART" id="SM00219">
    <property type="entry name" value="TyrKc"/>
    <property type="match status" value="1"/>
</dbReference>
<dbReference type="SUPFAM" id="SSF56112">
    <property type="entry name" value="Protein kinase-like (PK-like)"/>
    <property type="match status" value="1"/>
</dbReference>
<dbReference type="SUPFAM" id="SSF55550">
    <property type="entry name" value="SH2 domain"/>
    <property type="match status" value="2"/>
</dbReference>
<dbReference type="PROSITE" id="PS00107">
    <property type="entry name" value="PROTEIN_KINASE_ATP"/>
    <property type="match status" value="1"/>
</dbReference>
<dbReference type="PROSITE" id="PS50011">
    <property type="entry name" value="PROTEIN_KINASE_DOM"/>
    <property type="match status" value="1"/>
</dbReference>
<dbReference type="PROSITE" id="PS00109">
    <property type="entry name" value="PROTEIN_KINASE_TYR"/>
    <property type="match status" value="1"/>
</dbReference>
<dbReference type="PROSITE" id="PS50001">
    <property type="entry name" value="SH2"/>
    <property type="match status" value="2"/>
</dbReference>
<proteinExistence type="evidence at protein level"/>
<organism>
    <name type="scientific">Gallus gallus</name>
    <name type="common">Chicken</name>
    <dbReference type="NCBI Taxonomy" id="9031"/>
    <lineage>
        <taxon>Eukaryota</taxon>
        <taxon>Metazoa</taxon>
        <taxon>Chordata</taxon>
        <taxon>Craniata</taxon>
        <taxon>Vertebrata</taxon>
        <taxon>Euteleostomi</taxon>
        <taxon>Archelosauria</taxon>
        <taxon>Archosauria</taxon>
        <taxon>Dinosauria</taxon>
        <taxon>Saurischia</taxon>
        <taxon>Theropoda</taxon>
        <taxon>Coelurosauria</taxon>
        <taxon>Aves</taxon>
        <taxon>Neognathae</taxon>
        <taxon>Galloanserae</taxon>
        <taxon>Galliformes</taxon>
        <taxon>Phasianidae</taxon>
        <taxon>Phasianinae</taxon>
        <taxon>Gallus</taxon>
    </lineage>
</organism>